<gene>
    <name type="primary">env</name>
</gene>
<sequence>MLITTVHGQQIEINNIDTNHGYLLFSDKPVQIPSSFEHHCLRINLTEIDTIADYFEQRLRTDYHAPQVKFLYNKMRRELAGIALRHRNKRGLINIVGSVFKYLFGTLDENDRVDIQRKLETNAHNSVNLHELNDAIQLINDGMQKIQNYENNSNIINSLLYELMQFTEYIEDVEMGMQLSRLGLFNPKLLNYDKLENVNSQNILNIKTSTWINYNDNQLLIISHIPINFSLINTVKIIPYPDSNGYQLEYTDTQSYFERENKVYNNENKEINNECVTNIIKHLKPICNFESIHTDEIIKYIEPNTIVTWNLTQTSLKQNCQNSFNNIKIKGNKMIKVTQCKIEINSIILSENLFKPEIDLTPLYTPLNITKIKTVKHNDINEMISQNNITLYIFMTTVIIILILLYLYLRYVSFNPFMMLYAKLKLRKNQNQNTAQQIEMEDVPLPLLYPSIPAQV</sequence>
<evidence type="ECO:0000255" key="1"/>
<evidence type="ECO:0000305" key="2"/>
<proteinExistence type="predicted"/>
<name>ENV17_DROME</name>
<dbReference type="EMBL" id="X01472">
    <property type="protein sequence ID" value="CAA25703.1"/>
    <property type="status" value="ALT_INIT"/>
    <property type="molecule type" value="Genomic_DNA"/>
</dbReference>
<dbReference type="PIR" id="A03326">
    <property type="entry name" value="QXFF73"/>
</dbReference>
<dbReference type="SMR" id="P04283"/>
<dbReference type="GlyCosmos" id="P04283">
    <property type="glycosylation" value="6 sites, No reported glycans"/>
</dbReference>
<dbReference type="FlyBase" id="FBgn0027624">
    <property type="gene designation" value="17.6\env"/>
</dbReference>
<dbReference type="PRO" id="PR:P04283"/>
<dbReference type="InterPro" id="IPR022048">
    <property type="entry name" value="Envelope_fusion-like"/>
</dbReference>
<dbReference type="InterPro" id="IPR012014">
    <property type="entry name" value="Retroelement_env"/>
</dbReference>
<dbReference type="Pfam" id="PF12259">
    <property type="entry name" value="Baculo_F"/>
    <property type="match status" value="1"/>
</dbReference>
<dbReference type="PIRSF" id="PIRSF004631">
    <property type="entry name" value="Retroelement_env"/>
    <property type="match status" value="1"/>
</dbReference>
<protein>
    <recommendedName>
        <fullName>Retrovirus-related Env polyprotein from copia-like transposable element 17.6</fullName>
    </recommendedName>
</protein>
<accession>P04283</accession>
<organism>
    <name type="scientific">Drosophila melanogaster</name>
    <name type="common">Fruit fly</name>
    <dbReference type="NCBI Taxonomy" id="7227"/>
    <lineage>
        <taxon>Eukaryota</taxon>
        <taxon>Metazoa</taxon>
        <taxon>Ecdysozoa</taxon>
        <taxon>Arthropoda</taxon>
        <taxon>Hexapoda</taxon>
        <taxon>Insecta</taxon>
        <taxon>Pterygota</taxon>
        <taxon>Neoptera</taxon>
        <taxon>Endopterygota</taxon>
        <taxon>Diptera</taxon>
        <taxon>Brachycera</taxon>
        <taxon>Muscomorpha</taxon>
        <taxon>Ephydroidea</taxon>
        <taxon>Drosophilidae</taxon>
        <taxon>Drosophila</taxon>
        <taxon>Sophophora</taxon>
    </lineage>
</organism>
<reference key="1">
    <citation type="journal article" date="1984" name="Nature">
        <title>Identification of the coding sequence for a reverse transcriptase-like enzyme in a transposable genetic element in Drosophila melanogaster.</title>
        <authorList>
            <person name="Saigo K."/>
            <person name="Kugimiya W."/>
            <person name="Matsuo Y."/>
            <person name="Inouye S."/>
            <person name="Yoshioka K."/>
            <person name="Yuki S."/>
        </authorList>
    </citation>
    <scope>NUCLEOTIDE SEQUENCE [GENOMIC DNA]</scope>
</reference>
<feature type="chain" id="PRO_0000086980" description="Retrovirus-related Env polyprotein from copia-like transposable element 17.6">
    <location>
        <begin position="1"/>
        <end position="456"/>
    </location>
</feature>
<feature type="glycosylation site" description="N-linked (GlcNAc...) asparagine" evidence="1">
    <location>
        <position position="44"/>
    </location>
</feature>
<feature type="glycosylation site" description="N-linked (GlcNAc...) asparagine" evidence="1">
    <location>
        <position position="151"/>
    </location>
</feature>
<feature type="glycosylation site" description="N-linked (GlcNAc...) asparagine" evidence="1">
    <location>
        <position position="228"/>
    </location>
</feature>
<feature type="glycosylation site" description="N-linked (GlcNAc...) asparagine" evidence="1">
    <location>
        <position position="310"/>
    </location>
</feature>
<feature type="glycosylation site" description="N-linked (GlcNAc...) asparagine" evidence="1">
    <location>
        <position position="368"/>
    </location>
</feature>
<feature type="glycosylation site" description="N-linked (GlcNAc...) asparagine" evidence="1">
    <location>
        <position position="388"/>
    </location>
</feature>
<comment type="sequence caution" evidence="2">
    <conflict type="erroneous initiation">
        <sequence resource="EMBL-CDS" id="CAA25703"/>
    </conflict>
</comment>
<keyword id="KW-0325">Glycoprotein</keyword>
<keyword id="KW-0814">Transposable element</keyword>